<accession>Q07427</accession>
<organism>
    <name type="scientific">Carassius auratus</name>
    <name type="common">Goldfish</name>
    <dbReference type="NCBI Taxonomy" id="7957"/>
    <lineage>
        <taxon>Eukaryota</taxon>
        <taxon>Metazoa</taxon>
        <taxon>Chordata</taxon>
        <taxon>Craniata</taxon>
        <taxon>Vertebrata</taxon>
        <taxon>Euteleostomi</taxon>
        <taxon>Actinopterygii</taxon>
        <taxon>Neopterygii</taxon>
        <taxon>Teleostei</taxon>
        <taxon>Ostariophysi</taxon>
        <taxon>Cypriniformes</taxon>
        <taxon>Cyprinidae</taxon>
        <taxon>Cyprininae</taxon>
        <taxon>Carassius</taxon>
    </lineage>
</organism>
<comment type="function">
    <text evidence="1">When phosphorylated, plays a role in filament reorganization.</text>
</comment>
<comment type="subunit">
    <text evidence="1">Heterotetramer of two type I and two type II keratins. Keratin-18 associates with keratin-8 (By similarity).</text>
</comment>
<comment type="tissue specificity">
    <text evidence="6">Abundantly expressed in an even distribution throughout the optic nerve, localizing specifically to the astrocyte domains. Moderately expressed in spinal cord, brain, liver and oocytes.</text>
</comment>
<comment type="PTM">
    <text evidence="1">Phosphorylated.</text>
</comment>
<comment type="PTM">
    <text evidence="1">Proteolytically cleaved by caspases during epithelial cell apoptosis.</text>
</comment>
<comment type="miscellaneous">
    <text evidence="7">There are two types of cytoskeletal and microfibrillar keratin: I (acidic; 40-55 kDa) and II (neutral to basic; 56-70 kDa).</text>
</comment>
<comment type="similarity">
    <text evidence="4">Belongs to the intermediate filament family.</text>
</comment>
<keyword id="KW-0175">Coiled coil</keyword>
<keyword id="KW-0403">Intermediate filament</keyword>
<keyword id="KW-0416">Keratin</keyword>
<keyword id="KW-0597">Phosphoprotein</keyword>
<keyword id="KW-1185">Reference proteome</keyword>
<reference evidence="7 8" key="1">
    <citation type="journal article" date="1994" name="J. Comp. Neurol.">
        <title>Complex expression of keratins in goldfish optic nerve.</title>
        <authorList>
            <person name="Druger R.K."/>
            <person name="Glasgow E."/>
            <person name="Fuchs C."/>
            <person name="Levine E.M."/>
            <person name="Matthews J.P."/>
            <person name="Park C.Y."/>
            <person name="Schechter N."/>
        </authorList>
    </citation>
    <scope>NUCLEOTIDE SEQUENCE [MRNA]</scope>
    <scope>TISSUE SPECIFICITY</scope>
    <source>
        <tissue evidence="8">Optic nerve</tissue>
    </source>
</reference>
<feature type="initiator methionine" description="Removed" evidence="2">
    <location>
        <position position="1"/>
    </location>
</feature>
<feature type="chain" id="PRO_0000289071" description="Keratin, type I cytoskeletal 18" evidence="2">
    <location>
        <begin position="2"/>
        <end position="435"/>
    </location>
</feature>
<feature type="domain" description="IF rod" evidence="4">
    <location>
        <begin position="89"/>
        <end position="399"/>
    </location>
</feature>
<feature type="region of interest" description="Disordered" evidence="5">
    <location>
        <begin position="1"/>
        <end position="36"/>
    </location>
</feature>
<feature type="region of interest" description="Head" evidence="3">
    <location>
        <begin position="2"/>
        <end position="88"/>
    </location>
</feature>
<feature type="region of interest" description="Coil 1A" evidence="3">
    <location>
        <begin position="89"/>
        <end position="123"/>
    </location>
</feature>
<feature type="region of interest" description="Linker 1" evidence="3">
    <location>
        <begin position="124"/>
        <end position="140"/>
    </location>
</feature>
<feature type="region of interest" description="Coil 1B" evidence="3">
    <location>
        <begin position="141"/>
        <end position="232"/>
    </location>
</feature>
<feature type="region of interest" description="Linker 12" evidence="3">
    <location>
        <begin position="233"/>
        <end position="256"/>
    </location>
</feature>
<feature type="region of interest" description="Coil 2" evidence="3">
    <location>
        <begin position="257"/>
        <end position="394"/>
    </location>
</feature>
<feature type="region of interest" description="Tail" evidence="3">
    <location>
        <begin position="395"/>
        <end position="435"/>
    </location>
</feature>
<feature type="compositionally biased region" description="Low complexity" evidence="5">
    <location>
        <begin position="1"/>
        <end position="28"/>
    </location>
</feature>
<feature type="site" description="Cleavage; by caspases" evidence="1">
    <location>
        <begin position="246"/>
        <end position="247"/>
    </location>
</feature>
<feature type="site" description="Stutter" evidence="3">
    <location>
        <position position="339"/>
    </location>
</feature>
<sequence>MSLRSSYSVRSSTSQVPVSQMSQMSQMSIKRTTNVPTYRAARSTAAAGQGTRISSASYSGVRSGVGLPSMSSSIHVSATGATGDIMGNEKMAMQNLNDRLASYLRSETLEQANSKLELKIREALEKKGPEVCDYSRFQPIIDDLRRKIFDATSNNARLVLQIDNARLAADDFRVKYDSELSIRQGVEADIAGLRKVIDDTNMNRMNLESEIEALKEELIFLKKNHDNEVMELRNQISHSGVQVDVDAPKGQDLAKIMEEIRSKYEKMALKNQEELKAWHESQITEVQVQVIQNTEALEGARTEVNELRRQIQTLEIELESQRNLKGSLEATLRDTEMRYNMEIESLNAVTMQLEAELTQLRNNIQHQTQEYEALLNLKMKLEAEIATYRRLLDGGDFKLQDALEEQKRVKVMTVTQTLVDGKVVSSSTETKEKKF</sequence>
<protein>
    <recommendedName>
        <fullName>Keratin, type I cytoskeletal 18</fullName>
    </recommendedName>
    <alternativeName>
        <fullName>Cytokeratin-18</fullName>
        <shortName>CK-18</shortName>
    </alternativeName>
    <alternativeName>
        <fullName>Keratin-18</fullName>
        <shortName>K18</shortName>
    </alternativeName>
</protein>
<gene>
    <name type="primary">krt18</name>
</gene>
<evidence type="ECO:0000250" key="1"/>
<evidence type="ECO:0000250" key="2">
    <source>
        <dbReference type="UniProtKB" id="P05783"/>
    </source>
</evidence>
<evidence type="ECO:0000255" key="3"/>
<evidence type="ECO:0000255" key="4">
    <source>
        <dbReference type="PROSITE-ProRule" id="PRU01188"/>
    </source>
</evidence>
<evidence type="ECO:0000256" key="5">
    <source>
        <dbReference type="SAM" id="MobiDB-lite"/>
    </source>
</evidence>
<evidence type="ECO:0000269" key="6">
    <source>
    </source>
</evidence>
<evidence type="ECO:0000305" key="7"/>
<evidence type="ECO:0000312" key="8">
    <source>
        <dbReference type="EMBL" id="AAC38007.1"/>
    </source>
</evidence>
<name>K1C18_CARAU</name>
<proteinExistence type="evidence at transcript level"/>
<dbReference type="EMBL" id="L09744">
    <property type="protein sequence ID" value="AAC38007.1"/>
    <property type="molecule type" value="mRNA"/>
</dbReference>
<dbReference type="SMR" id="Q07427"/>
<dbReference type="Proteomes" id="UP000515129">
    <property type="component" value="Unplaced"/>
</dbReference>
<dbReference type="GO" id="GO:0045095">
    <property type="term" value="C:keratin filament"/>
    <property type="evidence" value="ECO:0007669"/>
    <property type="project" value="TreeGrafter"/>
</dbReference>
<dbReference type="GO" id="GO:0005198">
    <property type="term" value="F:structural molecule activity"/>
    <property type="evidence" value="ECO:0007669"/>
    <property type="project" value="InterPro"/>
</dbReference>
<dbReference type="GO" id="GO:0045104">
    <property type="term" value="P:intermediate filament cytoskeleton organization"/>
    <property type="evidence" value="ECO:0007669"/>
    <property type="project" value="TreeGrafter"/>
</dbReference>
<dbReference type="FunFam" id="1.20.5.1160:FF:000002">
    <property type="entry name" value="Type I keratin 10"/>
    <property type="match status" value="1"/>
</dbReference>
<dbReference type="FunFam" id="1.20.5.170:FF:000002">
    <property type="entry name" value="Type I keratin KA11"/>
    <property type="match status" value="1"/>
</dbReference>
<dbReference type="FunFam" id="1.20.5.500:FF:000001">
    <property type="entry name" value="Type II keratin 23"/>
    <property type="match status" value="1"/>
</dbReference>
<dbReference type="Gene3D" id="1.20.5.170">
    <property type="match status" value="1"/>
</dbReference>
<dbReference type="Gene3D" id="1.20.5.500">
    <property type="entry name" value="Single helix bin"/>
    <property type="match status" value="1"/>
</dbReference>
<dbReference type="Gene3D" id="1.20.5.1160">
    <property type="entry name" value="Vasodilator-stimulated phosphoprotein"/>
    <property type="match status" value="1"/>
</dbReference>
<dbReference type="InterPro" id="IPR018039">
    <property type="entry name" value="IF_conserved"/>
</dbReference>
<dbReference type="InterPro" id="IPR039008">
    <property type="entry name" value="IF_rod_dom"/>
</dbReference>
<dbReference type="InterPro" id="IPR002957">
    <property type="entry name" value="Keratin_I"/>
</dbReference>
<dbReference type="PANTHER" id="PTHR23239">
    <property type="entry name" value="INTERMEDIATE FILAMENT"/>
    <property type="match status" value="1"/>
</dbReference>
<dbReference type="PANTHER" id="PTHR23239:SF349">
    <property type="entry name" value="KERATIN, TYPE I CYTOSKELETAL 18"/>
    <property type="match status" value="1"/>
</dbReference>
<dbReference type="Pfam" id="PF00038">
    <property type="entry name" value="Filament"/>
    <property type="match status" value="1"/>
</dbReference>
<dbReference type="PRINTS" id="PR01248">
    <property type="entry name" value="TYPE1KERATIN"/>
</dbReference>
<dbReference type="SMART" id="SM01391">
    <property type="entry name" value="Filament"/>
    <property type="match status" value="1"/>
</dbReference>
<dbReference type="SUPFAM" id="SSF64593">
    <property type="entry name" value="Intermediate filament protein, coiled coil region"/>
    <property type="match status" value="1"/>
</dbReference>
<dbReference type="PROSITE" id="PS00226">
    <property type="entry name" value="IF_ROD_1"/>
    <property type="match status" value="1"/>
</dbReference>
<dbReference type="PROSITE" id="PS51842">
    <property type="entry name" value="IF_ROD_2"/>
    <property type="match status" value="1"/>
</dbReference>